<feature type="chain" id="PRO_0000076289" description="Polyhomeotic-like protein 2">
    <location>
        <begin position="1"/>
        <end position="344"/>
    </location>
</feature>
<feature type="domain" description="SAM" evidence="2">
    <location>
        <begin position="280"/>
        <end position="344"/>
    </location>
</feature>
<feature type="zinc finger region" description="FCS-type" evidence="3">
    <location>
        <begin position="114"/>
        <end position="148"/>
    </location>
</feature>
<feature type="region of interest" description="Disordered" evidence="4">
    <location>
        <begin position="1"/>
        <end position="28"/>
    </location>
</feature>
<feature type="region of interest" description="Disordered" evidence="4">
    <location>
        <begin position="165"/>
        <end position="269"/>
    </location>
</feature>
<feature type="short sequence motif" description="HD1">
    <location>
        <begin position="25"/>
        <end position="53"/>
    </location>
</feature>
<feature type="compositionally biased region" description="Polar residues" evidence="4">
    <location>
        <begin position="1"/>
        <end position="23"/>
    </location>
</feature>
<feature type="compositionally biased region" description="Basic residues" evidence="4">
    <location>
        <begin position="173"/>
        <end position="183"/>
    </location>
</feature>
<feature type="compositionally biased region" description="Polar residues" evidence="4">
    <location>
        <begin position="216"/>
        <end position="233"/>
    </location>
</feature>
<feature type="compositionally biased region" description="Low complexity" evidence="4">
    <location>
        <begin position="234"/>
        <end position="248"/>
    </location>
</feature>
<feature type="binding site" evidence="3">
    <location>
        <position position="123"/>
    </location>
    <ligand>
        <name>Zn(2+)</name>
        <dbReference type="ChEBI" id="CHEBI:29105"/>
    </ligand>
</feature>
<feature type="binding site" evidence="3">
    <location>
        <position position="126"/>
    </location>
    <ligand>
        <name>Zn(2+)</name>
        <dbReference type="ChEBI" id="CHEBI:29105"/>
    </ligand>
</feature>
<feature type="binding site" evidence="3">
    <location>
        <position position="142"/>
    </location>
    <ligand>
        <name>Zn(2+)</name>
        <dbReference type="ChEBI" id="CHEBI:29105"/>
    </ligand>
</feature>
<feature type="binding site" evidence="3">
    <location>
        <position position="146"/>
    </location>
    <ligand>
        <name>Zn(2+)</name>
        <dbReference type="ChEBI" id="CHEBI:29105"/>
    </ligand>
</feature>
<sequence>MTSGNGSSPVPTAATGNRTQNGENKPPQAVVKPQILTHFIEGFVIQEGAQPFPSHRSRAVLEVGHSSLLTGAQEKYQQSLLAEKVPQQDNNTTTTTTDSEMEETLVPGFPESKGDGDPPKLKCELCGRVDFEYKFKRSKRFCSMACAKRYNVGCTKRVGLFHPDRSKLQKPTVAKHARRRSRKTPLQTVGADPKKQQAAPVTPMNPGPIPSPSALKLSNSQEDSSRCSDNSSYEEPLSPMSASSSLSRARQEHNVEPPNLHSRDPIAMSQDFLPSDPTKWNVEDVYDFVRSLPGCQEISEEFRAQEIDGQALLLLKEDHLMSAMNIKLGPALKLYARISMLKDS</sequence>
<reference key="1">
    <citation type="submission" date="2005-06" db="EMBL/GenBank/DDBJ databases">
        <authorList>
            <consortium name="NIH - Xenopus Gene Collection (XGC) project"/>
        </authorList>
    </citation>
    <scope>NUCLEOTIDE SEQUENCE [LARGE SCALE MRNA]</scope>
</reference>
<gene>
    <name type="primary">phc2</name>
</gene>
<organism>
    <name type="scientific">Xenopus laevis</name>
    <name type="common">African clawed frog</name>
    <dbReference type="NCBI Taxonomy" id="8355"/>
    <lineage>
        <taxon>Eukaryota</taxon>
        <taxon>Metazoa</taxon>
        <taxon>Chordata</taxon>
        <taxon>Craniata</taxon>
        <taxon>Vertebrata</taxon>
        <taxon>Euteleostomi</taxon>
        <taxon>Amphibia</taxon>
        <taxon>Batrachia</taxon>
        <taxon>Anura</taxon>
        <taxon>Pipoidea</taxon>
        <taxon>Pipidae</taxon>
        <taxon>Xenopodinae</taxon>
        <taxon>Xenopus</taxon>
        <taxon>Xenopus</taxon>
    </lineage>
</organism>
<protein>
    <recommendedName>
        <fullName>Polyhomeotic-like protein 2</fullName>
    </recommendedName>
</protein>
<dbReference type="EMBL" id="BC097691">
    <property type="protein sequence ID" value="AAH97691.1"/>
    <property type="molecule type" value="mRNA"/>
</dbReference>
<dbReference type="RefSeq" id="NP_001089479.1">
    <property type="nucleotide sequence ID" value="NM_001096010.1"/>
</dbReference>
<dbReference type="RefSeq" id="XP_018097321.1">
    <property type="nucleotide sequence ID" value="XM_018241832.1"/>
</dbReference>
<dbReference type="RefSeq" id="XP_018097322.1">
    <property type="nucleotide sequence ID" value="XM_018241833.1"/>
</dbReference>
<dbReference type="SMR" id="Q4V7W5"/>
<dbReference type="DNASU" id="734530"/>
<dbReference type="GeneID" id="734530"/>
<dbReference type="KEGG" id="xla:734530"/>
<dbReference type="AGR" id="Xenbase:XB-GENE-997001"/>
<dbReference type="CTD" id="734530"/>
<dbReference type="Xenbase" id="XB-GENE-997001">
    <property type="gene designation" value="phc2.L"/>
</dbReference>
<dbReference type="OrthoDB" id="2390104at2759"/>
<dbReference type="Proteomes" id="UP000186698">
    <property type="component" value="Chromosome 7L"/>
</dbReference>
<dbReference type="Bgee" id="734530">
    <property type="expression patterns" value="Expressed in oocyte and 11 other cell types or tissues"/>
</dbReference>
<dbReference type="GO" id="GO:0005634">
    <property type="term" value="C:nucleus"/>
    <property type="evidence" value="ECO:0000318"/>
    <property type="project" value="GO_Central"/>
</dbReference>
<dbReference type="GO" id="GO:0031519">
    <property type="term" value="C:PcG protein complex"/>
    <property type="evidence" value="ECO:0000250"/>
    <property type="project" value="UniProtKB"/>
</dbReference>
<dbReference type="GO" id="GO:0035102">
    <property type="term" value="C:PRC1 complex"/>
    <property type="evidence" value="ECO:0000250"/>
    <property type="project" value="UniProtKB"/>
</dbReference>
<dbReference type="GO" id="GO:0003682">
    <property type="term" value="F:chromatin binding"/>
    <property type="evidence" value="ECO:0000318"/>
    <property type="project" value="GO_Central"/>
</dbReference>
<dbReference type="GO" id="GO:0003677">
    <property type="term" value="F:DNA binding"/>
    <property type="evidence" value="ECO:0007669"/>
    <property type="project" value="UniProtKB-KW"/>
</dbReference>
<dbReference type="GO" id="GO:0042393">
    <property type="term" value="F:histone binding"/>
    <property type="evidence" value="ECO:0000318"/>
    <property type="project" value="GO_Central"/>
</dbReference>
<dbReference type="GO" id="GO:0008270">
    <property type="term" value="F:zinc ion binding"/>
    <property type="evidence" value="ECO:0007669"/>
    <property type="project" value="UniProtKB-KW"/>
</dbReference>
<dbReference type="GO" id="GO:0045892">
    <property type="term" value="P:negative regulation of DNA-templated transcription"/>
    <property type="evidence" value="ECO:0000318"/>
    <property type="project" value="GO_Central"/>
</dbReference>
<dbReference type="CDD" id="cd09577">
    <property type="entry name" value="SAM_Ph1_2_3"/>
    <property type="match status" value="1"/>
</dbReference>
<dbReference type="FunFam" id="1.10.150.50:FF:000011">
    <property type="entry name" value="Polyhomeotic-like protein 2 isoform 1"/>
    <property type="match status" value="1"/>
</dbReference>
<dbReference type="FunFam" id="3.30.60.160:FF:000002">
    <property type="entry name" value="Polyhomeotic-like protein 2 isoform 1"/>
    <property type="match status" value="1"/>
</dbReference>
<dbReference type="Gene3D" id="3.30.60.160">
    <property type="match status" value="1"/>
</dbReference>
<dbReference type="Gene3D" id="1.10.150.50">
    <property type="entry name" value="Transcription Factor, Ets-1"/>
    <property type="match status" value="1"/>
</dbReference>
<dbReference type="InterPro" id="IPR050548">
    <property type="entry name" value="PcG_chromatin_remod_factors"/>
</dbReference>
<dbReference type="InterPro" id="IPR001660">
    <property type="entry name" value="SAM"/>
</dbReference>
<dbReference type="InterPro" id="IPR013761">
    <property type="entry name" value="SAM/pointed_sf"/>
</dbReference>
<dbReference type="InterPro" id="IPR012313">
    <property type="entry name" value="Znf_FCS"/>
</dbReference>
<dbReference type="InterPro" id="IPR038603">
    <property type="entry name" value="Znf_FCS_sf"/>
</dbReference>
<dbReference type="PANTHER" id="PTHR12247">
    <property type="entry name" value="POLYCOMB GROUP PROTEIN"/>
    <property type="match status" value="1"/>
</dbReference>
<dbReference type="PANTHER" id="PTHR12247:SF86">
    <property type="entry name" value="POLYHOMEOTIC-LIKE PROTEIN 2"/>
    <property type="match status" value="1"/>
</dbReference>
<dbReference type="Pfam" id="PF16616">
    <property type="entry name" value="PHC2_SAM_assoc"/>
    <property type="match status" value="1"/>
</dbReference>
<dbReference type="Pfam" id="PF00536">
    <property type="entry name" value="SAM_1"/>
    <property type="match status" value="1"/>
</dbReference>
<dbReference type="Pfam" id="PF21319">
    <property type="entry name" value="zf-FCS_1"/>
    <property type="match status" value="1"/>
</dbReference>
<dbReference type="SMART" id="SM00454">
    <property type="entry name" value="SAM"/>
    <property type="match status" value="1"/>
</dbReference>
<dbReference type="SUPFAM" id="SSF47769">
    <property type="entry name" value="SAM/Pointed domain"/>
    <property type="match status" value="1"/>
</dbReference>
<dbReference type="PROSITE" id="PS50105">
    <property type="entry name" value="SAM_DOMAIN"/>
    <property type="match status" value="1"/>
</dbReference>
<dbReference type="PROSITE" id="PS51024">
    <property type="entry name" value="ZF_FCS"/>
    <property type="match status" value="1"/>
</dbReference>
<evidence type="ECO:0000250" key="1"/>
<evidence type="ECO:0000255" key="2">
    <source>
        <dbReference type="PROSITE-ProRule" id="PRU00184"/>
    </source>
</evidence>
<evidence type="ECO:0000255" key="3">
    <source>
        <dbReference type="PROSITE-ProRule" id="PRU00367"/>
    </source>
</evidence>
<evidence type="ECO:0000256" key="4">
    <source>
        <dbReference type="SAM" id="MobiDB-lite"/>
    </source>
</evidence>
<evidence type="ECO:0000305" key="5"/>
<keyword id="KW-0217">Developmental protein</keyword>
<keyword id="KW-0238">DNA-binding</keyword>
<keyword id="KW-0479">Metal-binding</keyword>
<keyword id="KW-0539">Nucleus</keyword>
<keyword id="KW-1185">Reference proteome</keyword>
<keyword id="KW-0862">Zinc</keyword>
<keyword id="KW-0863">Zinc-finger</keyword>
<accession>Q4V7W5</accession>
<name>PHC2_XENLA</name>
<proteinExistence type="evidence at transcript level"/>
<comment type="function">
    <text evidence="1">Component of a Polycomb group (PcG) multiprotein PRC1-like complex, a complex class required to maintain the transcriptionally repressive state of many genes, including Hox genes, throughout development. PcG PRC1 complex acts via chromatin remodeling and modification of histones; it mediates monoubiquitination of histone H2A 'Lys-119', rendering chromatin heritably changed in its expressibility (By similarity).</text>
</comment>
<comment type="subunit">
    <text evidence="1">Component of a PRC1-like complex.</text>
</comment>
<comment type="subcellular location">
    <subcellularLocation>
        <location evidence="5">Nucleus</location>
    </subcellularLocation>
</comment>